<feature type="chain" id="PRO_0000311209" description="Cytochrome c oxidase assembly protein CtaG">
    <location>
        <begin position="1"/>
        <end position="198"/>
    </location>
</feature>
<feature type="topological domain" description="Cytoplasmic" evidence="1">
    <location>
        <begin position="1"/>
        <end position="12"/>
    </location>
</feature>
<feature type="transmembrane region" description="Helical; Signal-anchor for type II membrane protein" evidence="1">
    <location>
        <begin position="13"/>
        <end position="35"/>
    </location>
</feature>
<feature type="topological domain" description="Periplasmic" evidence="1">
    <location>
        <begin position="36"/>
        <end position="198"/>
    </location>
</feature>
<evidence type="ECO:0000255" key="1">
    <source>
        <dbReference type="HAMAP-Rule" id="MF_00155"/>
    </source>
</evidence>
<accession>A6U6U8</accession>
<name>COXZ_SINMW</name>
<dbReference type="EMBL" id="CP000738">
    <property type="protein sequence ID" value="ABR59378.1"/>
    <property type="molecule type" value="Genomic_DNA"/>
</dbReference>
<dbReference type="RefSeq" id="WP_011974724.1">
    <property type="nucleotide sequence ID" value="NC_009636.1"/>
</dbReference>
<dbReference type="RefSeq" id="YP_001326213.1">
    <property type="nucleotide sequence ID" value="NC_009636.1"/>
</dbReference>
<dbReference type="SMR" id="A6U6U8"/>
<dbReference type="STRING" id="366394.Smed_0522"/>
<dbReference type="KEGG" id="smd:Smed_0522"/>
<dbReference type="PATRIC" id="fig|366394.8.peg.3609"/>
<dbReference type="eggNOG" id="COG3175">
    <property type="taxonomic scope" value="Bacteria"/>
</dbReference>
<dbReference type="HOGENOM" id="CLU_045000_5_0_5"/>
<dbReference type="OrthoDB" id="9804841at2"/>
<dbReference type="Proteomes" id="UP000001108">
    <property type="component" value="Chromosome"/>
</dbReference>
<dbReference type="GO" id="GO:0005886">
    <property type="term" value="C:plasma membrane"/>
    <property type="evidence" value="ECO:0007669"/>
    <property type="project" value="UniProtKB-SubCell"/>
</dbReference>
<dbReference type="GO" id="GO:0005507">
    <property type="term" value="F:copper ion binding"/>
    <property type="evidence" value="ECO:0007669"/>
    <property type="project" value="InterPro"/>
</dbReference>
<dbReference type="GO" id="GO:0008535">
    <property type="term" value="P:respiratory chain complex IV assembly"/>
    <property type="evidence" value="ECO:0007669"/>
    <property type="project" value="UniProtKB-UniRule"/>
</dbReference>
<dbReference type="FunFam" id="2.60.370.10:FF:000001">
    <property type="entry name" value="COX11 cytochrome c oxidase assembly homolog"/>
    <property type="match status" value="1"/>
</dbReference>
<dbReference type="Gene3D" id="2.60.370.10">
    <property type="entry name" value="Ctag/Cox11"/>
    <property type="match status" value="1"/>
</dbReference>
<dbReference type="HAMAP" id="MF_00155">
    <property type="entry name" value="CtaG"/>
    <property type="match status" value="1"/>
</dbReference>
<dbReference type="InterPro" id="IPR023471">
    <property type="entry name" value="CtaG/Cox11_dom_sf"/>
</dbReference>
<dbReference type="InterPro" id="IPR007533">
    <property type="entry name" value="Cyt_c_oxidase_assmbl_CtaG"/>
</dbReference>
<dbReference type="NCBIfam" id="NF003465">
    <property type="entry name" value="PRK05089.1"/>
    <property type="match status" value="1"/>
</dbReference>
<dbReference type="PANTHER" id="PTHR21320:SF3">
    <property type="entry name" value="CYTOCHROME C OXIDASE ASSEMBLY PROTEIN COX11, MITOCHONDRIAL-RELATED"/>
    <property type="match status" value="1"/>
</dbReference>
<dbReference type="PANTHER" id="PTHR21320">
    <property type="entry name" value="CYTOCHROME C OXIDASE ASSEMBLY PROTEIN COX11-RELATED"/>
    <property type="match status" value="1"/>
</dbReference>
<dbReference type="Pfam" id="PF04442">
    <property type="entry name" value="CtaG_Cox11"/>
    <property type="match status" value="1"/>
</dbReference>
<dbReference type="PIRSF" id="PIRSF005413">
    <property type="entry name" value="COX11"/>
    <property type="match status" value="1"/>
</dbReference>
<dbReference type="SUPFAM" id="SSF110111">
    <property type="entry name" value="Ctag/Cox11"/>
    <property type="match status" value="1"/>
</dbReference>
<proteinExistence type="inferred from homology"/>
<keyword id="KW-0997">Cell inner membrane</keyword>
<keyword id="KW-1003">Cell membrane</keyword>
<keyword id="KW-0186">Copper</keyword>
<keyword id="KW-0472">Membrane</keyword>
<keyword id="KW-0735">Signal-anchor</keyword>
<keyword id="KW-0812">Transmembrane</keyword>
<keyword id="KW-1133">Transmembrane helix</keyword>
<reference key="1">
    <citation type="submission" date="2007-06" db="EMBL/GenBank/DDBJ databases">
        <title>Complete sequence of Sinorhizobium medicae WSM419 chromosome.</title>
        <authorList>
            <consortium name="US DOE Joint Genome Institute"/>
            <person name="Copeland A."/>
            <person name="Lucas S."/>
            <person name="Lapidus A."/>
            <person name="Barry K."/>
            <person name="Glavina del Rio T."/>
            <person name="Dalin E."/>
            <person name="Tice H."/>
            <person name="Pitluck S."/>
            <person name="Chain P."/>
            <person name="Malfatti S."/>
            <person name="Shin M."/>
            <person name="Vergez L."/>
            <person name="Schmutz J."/>
            <person name="Larimer F."/>
            <person name="Land M."/>
            <person name="Hauser L."/>
            <person name="Kyrpides N."/>
            <person name="Mikhailova N."/>
            <person name="Reeve W.G."/>
            <person name="Richardson P."/>
        </authorList>
    </citation>
    <scope>NUCLEOTIDE SEQUENCE [LARGE SCALE GENOMIC DNA]</scope>
    <source>
        <strain>WSM419</strain>
    </source>
</reference>
<sequence length="198" mass="21920">MADTGQSDRKERSNGVIVGTCLAFVVGMVGMAYAAVPLYDMFCRVTGYNGTTQRVEQESDLILDEKVKVTFDANVAAGLPWEFAPVQRDIDVRIGETVQITYRARNLASTPTTGQATFNVTPMAAGAYFNKVQCFCFTETTLQPGEEMEMPVVFFVDPEIVKTVETKGIKTLTLSYTFYPREPSKPVAQVKSRTENKL</sequence>
<comment type="function">
    <text evidence="1">Exerts its effect at some terminal stage of cytochrome c oxidase synthesis, probably by being involved in the insertion of the copper B into subunit I.</text>
</comment>
<comment type="subcellular location">
    <subcellularLocation>
        <location evidence="1">Cell inner membrane</location>
        <topology evidence="1">Single-pass type II membrane protein</topology>
        <orientation evidence="1">Periplasmic side</orientation>
    </subcellularLocation>
</comment>
<comment type="similarity">
    <text evidence="1">Belongs to the COX11/CtaG family.</text>
</comment>
<gene>
    <name evidence="1" type="primary">ctaG</name>
    <name type="ordered locus">Smed_0522</name>
</gene>
<organism>
    <name type="scientific">Sinorhizobium medicae (strain WSM419)</name>
    <name type="common">Ensifer medicae</name>
    <dbReference type="NCBI Taxonomy" id="366394"/>
    <lineage>
        <taxon>Bacteria</taxon>
        <taxon>Pseudomonadati</taxon>
        <taxon>Pseudomonadota</taxon>
        <taxon>Alphaproteobacteria</taxon>
        <taxon>Hyphomicrobiales</taxon>
        <taxon>Rhizobiaceae</taxon>
        <taxon>Sinorhizobium/Ensifer group</taxon>
        <taxon>Sinorhizobium</taxon>
    </lineage>
</organism>
<protein>
    <recommendedName>
        <fullName evidence="1">Cytochrome c oxidase assembly protein CtaG</fullName>
    </recommendedName>
</protein>